<keyword id="KW-1185">Reference proteome</keyword>
<keyword id="KW-0808">Transferase</keyword>
<proteinExistence type="evidence at protein level"/>
<comment type="function">
    <text evidence="3">Component of the dihydroxyacetone kinase complex, which is responsible for the phosphoenolpyruvate (PEP)-dependent phosphorylation of dihydroxyacetone. DhaM serves as the phosphoryl donor. Is phosphorylated by phosphoenolpyruvate in an EI- and HPr-dependent reaction, and a phosphorelay system on histidine residues finally leads to phosphoryl transfer to DhaL and dihydroxyacetone.</text>
</comment>
<comment type="catalytic activity">
    <reaction evidence="3">
        <text>dihydroxyacetone + phosphoenolpyruvate = dihydroxyacetone phosphate + pyruvate</text>
        <dbReference type="Rhea" id="RHEA:18381"/>
        <dbReference type="ChEBI" id="CHEBI:15361"/>
        <dbReference type="ChEBI" id="CHEBI:16016"/>
        <dbReference type="ChEBI" id="CHEBI:57642"/>
        <dbReference type="ChEBI" id="CHEBI:58702"/>
        <dbReference type="EC" id="2.7.1.121"/>
    </reaction>
</comment>
<comment type="biophysicochemical properties">
    <kinetics>
        <KM evidence="3">45 uM for dihydroxyacetone</KM>
        <text evidence="3">kcat is 2.8 sec(-1). Values measured with the DhaKLM complex.</text>
    </kinetics>
</comment>
<comment type="pathway">
    <text evidence="7">Polyol metabolism; glycerol degradation.</text>
</comment>
<comment type="subunit">
    <text evidence="3">Homodimer (PubMed:11350937). The dihydroxyacetone kinase complex is composed of a homodimer of DhaM, a homodimer of DhaK and the subunit DhaL.</text>
</comment>
<comment type="domain">
    <text evidence="8">Consists of three domains. The N-terminal dimerization domain has the same fold as the IIA domain of the mannose transporter of the bacterial phosphoenolpyruvate:sugar phosphotransferase system (PTS). The middle domain is similar to HPr and the C-terminus is similar to the N-terminal domain of enzyme I (EI) of the PTS. The IIA domain of DhaM (via phospho-His-9), instead of ATP, is the phosphoryl donor to dihydroxyacetone (Dha). The phosphoryl flow likely involves HPr ('His-15') -&gt; DhaM (His-430 -&gt; His-169 -&gt; His-9) -&gt; DhaL-ADP -&gt; Dha. The HPr-like domain of DhaM cannot efficiently substitute for the general carrier protein HPr.</text>
</comment>
<comment type="miscellaneous">
    <text evidence="3">Unlike the carbohydrate-specific transporters of the PTS, the complex DhaKLM has no transport activity.</text>
</comment>
<comment type="similarity">
    <text evidence="7">Belongs to the PEP-utilizing enzyme family.</text>
</comment>
<comment type="caution">
    <text evidence="4 5">Was reported to be a protein deacetylase that removes acetyl groups on specific lysine residues in target proteins (PubMed:26716769). However, later experiments demonstrate that this protein does not have any protein deacetylase activity; the discrepancy observed seems to be due to contaminants having proteolytic activity (PubMed:29939131).</text>
</comment>
<gene>
    <name evidence="6" type="primary">dhaM</name>
    <name type="synonym">ycgC</name>
    <name type="ordered locus">b1198</name>
    <name type="ordered locus">JW5185</name>
</gene>
<reference key="1">
    <citation type="journal article" date="1996" name="DNA Res.">
        <title>A 718-kb DNA sequence of the Escherichia coli K-12 genome corresponding to the 12.7-28.0 min region on the linkage map.</title>
        <authorList>
            <person name="Oshima T."/>
            <person name="Aiba H."/>
            <person name="Baba T."/>
            <person name="Fujita K."/>
            <person name="Hayashi K."/>
            <person name="Honjo A."/>
            <person name="Ikemoto K."/>
            <person name="Inada T."/>
            <person name="Itoh T."/>
            <person name="Kajihara M."/>
            <person name="Kanai K."/>
            <person name="Kashimoto K."/>
            <person name="Kimura S."/>
            <person name="Kitagawa M."/>
            <person name="Makino K."/>
            <person name="Masuda S."/>
            <person name="Miki T."/>
            <person name="Mizobuchi K."/>
            <person name="Mori H."/>
            <person name="Motomura K."/>
            <person name="Nakamura Y."/>
            <person name="Nashimoto H."/>
            <person name="Nishio Y."/>
            <person name="Saito N."/>
            <person name="Sampei G."/>
            <person name="Seki Y."/>
            <person name="Tagami H."/>
            <person name="Takemoto K."/>
            <person name="Wada C."/>
            <person name="Yamamoto Y."/>
            <person name="Yano M."/>
            <person name="Horiuchi T."/>
        </authorList>
    </citation>
    <scope>NUCLEOTIDE SEQUENCE [LARGE SCALE GENOMIC DNA]</scope>
    <source>
        <strain>K12 / W3110 / ATCC 27325 / DSM 5911</strain>
    </source>
</reference>
<reference key="2">
    <citation type="journal article" date="1997" name="Science">
        <title>The complete genome sequence of Escherichia coli K-12.</title>
        <authorList>
            <person name="Blattner F.R."/>
            <person name="Plunkett G. III"/>
            <person name="Bloch C.A."/>
            <person name="Perna N.T."/>
            <person name="Burland V."/>
            <person name="Riley M."/>
            <person name="Collado-Vides J."/>
            <person name="Glasner J.D."/>
            <person name="Rode C.K."/>
            <person name="Mayhew G.F."/>
            <person name="Gregor J."/>
            <person name="Davis N.W."/>
            <person name="Kirkpatrick H.A."/>
            <person name="Goeden M.A."/>
            <person name="Rose D.J."/>
            <person name="Mau B."/>
            <person name="Shao Y."/>
        </authorList>
    </citation>
    <scope>NUCLEOTIDE SEQUENCE [LARGE SCALE GENOMIC DNA]</scope>
    <source>
        <strain>K12 / MG1655 / ATCC 47076</strain>
    </source>
</reference>
<reference key="3">
    <citation type="journal article" date="2006" name="Mol. Syst. Biol.">
        <title>Highly accurate genome sequences of Escherichia coli K-12 strains MG1655 and W3110.</title>
        <authorList>
            <person name="Hayashi K."/>
            <person name="Morooka N."/>
            <person name="Yamamoto Y."/>
            <person name="Fujita K."/>
            <person name="Isono K."/>
            <person name="Choi S."/>
            <person name="Ohtsubo E."/>
            <person name="Baba T."/>
            <person name="Wanner B.L."/>
            <person name="Mori H."/>
            <person name="Horiuchi T."/>
        </authorList>
    </citation>
    <scope>NUCLEOTIDE SEQUENCE [LARGE SCALE GENOMIC DNA]</scope>
    <source>
        <strain>K12 / W3110 / ATCC 27325 / DSM 5911</strain>
    </source>
</reference>
<reference key="4">
    <citation type="journal article" date="1989" name="Mol. Gen. Genet.">
        <title>Analysis and DNA sequence of the osmoregulated treA gene encoding the periplasmic trehalase of Escherichia coli K12.</title>
        <authorList>
            <person name="Gutierrez C."/>
            <person name="Ardourel M."/>
            <person name="Bremer E."/>
            <person name="Middendorf A."/>
            <person name="Boos W."/>
            <person name="Ehmann U."/>
        </authorList>
    </citation>
    <scope>NUCLEOTIDE SEQUENCE [GENOMIC DNA] OF 416-472</scope>
    <source>
        <strain>K12</strain>
    </source>
</reference>
<reference key="5">
    <citation type="journal article" date="1994" name="Nucleic Acids Res.">
        <title>Intrinsic and extrinsic approaches for detecting genes in a bacterial genome.</title>
        <authorList>
            <person name="Borodovsky M."/>
            <person name="Rudd K.E."/>
            <person name="Koonin E.V."/>
        </authorList>
    </citation>
    <scope>IDENTIFICATION</scope>
</reference>
<reference key="6">
    <citation type="journal article" date="2001" name="EMBO J.">
        <title>The dihydroxyacetone kinase of Escherichia coli utilizes a phosphoprotein instead of ATP as phosphoryl donor.</title>
        <authorList>
            <person name="Gutknecht R."/>
            <person name="Beutler R."/>
            <person name="Garcia-Alles L.F."/>
            <person name="Baumann U."/>
            <person name="Erni B."/>
        </authorList>
    </citation>
    <scope>FUNCTION AS A PHOSPHORYL DONOR FOR DIHYDROXYACETONE KINASE</scope>
    <scope>CATALYTIC ACTIVITY OF THE COMPLEX</scope>
    <scope>BIOPHYSICOCHEMICAL PROPERTIES</scope>
    <scope>PHOSPHORYLATION</scope>
    <scope>SUBUNIT</scope>
    <scope>MUTAGENESIS OF HIS-9; HIS-169 AND HIS-430</scope>
    <scope>ACTIVE SITE</scope>
    <scope>DOMAIN</scope>
    <source>
        <strain>K12</strain>
    </source>
</reference>
<reference key="7">
    <citation type="journal article" date="2015" name="Elife">
        <title>YcgC represents a new protein deacetylase family in prokaryotes.</title>
        <authorList>
            <person name="Tu S."/>
            <person name="Guo S.J."/>
            <person name="Chen C.S."/>
            <person name="Liu C.X."/>
            <person name="Jiang H.W."/>
            <person name="Ge F."/>
            <person name="Deng J.Y."/>
            <person name="Zhou Y.M."/>
            <person name="Czajkowsky D.M."/>
            <person name="Li Y."/>
            <person name="Qi B.R."/>
            <person name="Ahn Y.H."/>
            <person name="Cole P.A."/>
            <person name="Zhu H."/>
            <person name="Tao S.C."/>
        </authorList>
    </citation>
    <scope>PROTEIN-LYSINE DEACETYLASE ACTIVITY</scope>
    <scope>CAUTION</scope>
</reference>
<reference key="8">
    <citation type="journal article" date="2018" name="Elife">
        <title>Comment on 'YcgC represents a new protein deacetylase family in prokaryotes'.</title>
        <authorList>
            <person name="Kremer M."/>
            <person name="Kuhlmann N."/>
            <person name="Lechner M."/>
            <person name="Baldus L."/>
            <person name="Lammers M."/>
        </authorList>
    </citation>
    <scope>LACK OF PROTEIN-LYSINE DEACETYLASE ACTIVITY</scope>
    <scope>CAUTION</scope>
</reference>
<dbReference type="EC" id="2.7.1.121" evidence="3"/>
<dbReference type="EMBL" id="U00096">
    <property type="protein sequence ID" value="AAC74282.4"/>
    <property type="molecule type" value="Genomic_DNA"/>
</dbReference>
<dbReference type="EMBL" id="AP009048">
    <property type="protein sequence ID" value="BAA36055.2"/>
    <property type="molecule type" value="Genomic_DNA"/>
</dbReference>
<dbReference type="EMBL" id="X15868">
    <property type="status" value="NOT_ANNOTATED_CDS"/>
    <property type="molecule type" value="Genomic_DNA"/>
</dbReference>
<dbReference type="PIR" id="C64866">
    <property type="entry name" value="C64866"/>
</dbReference>
<dbReference type="RefSeq" id="NP_415716.4">
    <property type="nucleotide sequence ID" value="NC_000913.3"/>
</dbReference>
<dbReference type="RefSeq" id="WP_001301101.1">
    <property type="nucleotide sequence ID" value="NZ_SSZK01000010.1"/>
</dbReference>
<dbReference type="SMR" id="P37349"/>
<dbReference type="BioGRID" id="4260761">
    <property type="interactions" value="31"/>
</dbReference>
<dbReference type="BioGRID" id="850116">
    <property type="interactions" value="1"/>
</dbReference>
<dbReference type="ComplexPortal" id="CPX-2634">
    <property type="entry name" value="Dha Kinase"/>
</dbReference>
<dbReference type="DIP" id="DIP-11551N"/>
<dbReference type="FunCoup" id="P37349">
    <property type="interactions" value="112"/>
</dbReference>
<dbReference type="IntAct" id="P37349">
    <property type="interactions" value="7"/>
</dbReference>
<dbReference type="STRING" id="511145.b1198"/>
<dbReference type="jPOST" id="P37349"/>
<dbReference type="PaxDb" id="511145-b1198"/>
<dbReference type="EnsemblBacteria" id="AAC74282">
    <property type="protein sequence ID" value="AAC74282"/>
    <property type="gene ID" value="b1198"/>
</dbReference>
<dbReference type="GeneID" id="945749"/>
<dbReference type="KEGG" id="ecj:JW5185"/>
<dbReference type="KEGG" id="eco:b1198"/>
<dbReference type="KEGG" id="ecoc:C3026_07045"/>
<dbReference type="PATRIC" id="fig|1411691.4.peg.1087"/>
<dbReference type="EchoBASE" id="EB2299"/>
<dbReference type="eggNOG" id="COG1080">
    <property type="taxonomic scope" value="Bacteria"/>
</dbReference>
<dbReference type="eggNOG" id="COG1925">
    <property type="taxonomic scope" value="Bacteria"/>
</dbReference>
<dbReference type="eggNOG" id="COG3412">
    <property type="taxonomic scope" value="Bacteria"/>
</dbReference>
<dbReference type="InParanoid" id="P37349"/>
<dbReference type="OMA" id="WAWHQVL"/>
<dbReference type="OrthoDB" id="7065393at2"/>
<dbReference type="PhylomeDB" id="P37349"/>
<dbReference type="BioCyc" id="EcoCyc:EG12399-MONOMER"/>
<dbReference type="BioCyc" id="MetaCyc:EG12399-MONOMER"/>
<dbReference type="BRENDA" id="2.7.1.121">
    <property type="organism ID" value="2026"/>
</dbReference>
<dbReference type="BRENDA" id="2.7.1.29">
    <property type="organism ID" value="2026"/>
</dbReference>
<dbReference type="SABIO-RK" id="P37349"/>
<dbReference type="UniPathway" id="UPA00616"/>
<dbReference type="PRO" id="PR:P37349"/>
<dbReference type="Proteomes" id="UP000000625">
    <property type="component" value="Chromosome"/>
</dbReference>
<dbReference type="GO" id="GO:0005829">
    <property type="term" value="C:cytosol"/>
    <property type="evidence" value="ECO:0000314"/>
    <property type="project" value="EcoCyc"/>
</dbReference>
<dbReference type="GO" id="GO:0016020">
    <property type="term" value="C:membrane"/>
    <property type="evidence" value="ECO:0007669"/>
    <property type="project" value="InterPro"/>
</dbReference>
<dbReference type="GO" id="GO:1990234">
    <property type="term" value="C:transferase complex"/>
    <property type="evidence" value="ECO:0000353"/>
    <property type="project" value="ComplexPortal"/>
</dbReference>
<dbReference type="GO" id="GO:0047324">
    <property type="term" value="F:phosphoenolpyruvate-glycerone phosphotransferase activity"/>
    <property type="evidence" value="ECO:0000250"/>
    <property type="project" value="UniProtKB"/>
</dbReference>
<dbReference type="GO" id="GO:0042803">
    <property type="term" value="F:protein homodimerization activity"/>
    <property type="evidence" value="ECO:0000314"/>
    <property type="project" value="EcoCyc"/>
</dbReference>
<dbReference type="GO" id="GO:0046835">
    <property type="term" value="P:carbohydrate phosphorylation"/>
    <property type="evidence" value="ECO:0000314"/>
    <property type="project" value="ComplexPortal"/>
</dbReference>
<dbReference type="GO" id="GO:0006974">
    <property type="term" value="P:DNA damage response"/>
    <property type="evidence" value="ECO:0000270"/>
    <property type="project" value="EcoliWiki"/>
</dbReference>
<dbReference type="GO" id="GO:0019563">
    <property type="term" value="P:glycerol catabolic process"/>
    <property type="evidence" value="ECO:0007669"/>
    <property type="project" value="UniProtKB-UniPathway"/>
</dbReference>
<dbReference type="GO" id="GO:0009401">
    <property type="term" value="P:phosphoenolpyruvate-dependent sugar phosphotransferase system"/>
    <property type="evidence" value="ECO:0007669"/>
    <property type="project" value="InterPro"/>
</dbReference>
<dbReference type="GO" id="GO:0006090">
    <property type="term" value="P:pyruvate metabolic process"/>
    <property type="evidence" value="ECO:0000314"/>
    <property type="project" value="ComplexPortal"/>
</dbReference>
<dbReference type="CDD" id="cd00367">
    <property type="entry name" value="PTS-HPr_like"/>
    <property type="match status" value="1"/>
</dbReference>
<dbReference type="FunFam" id="3.40.50.510:FF:000002">
    <property type="entry name" value="PTS-dependent dihydroxyacetone kinase, DhaM subunit"/>
    <property type="match status" value="1"/>
</dbReference>
<dbReference type="Gene3D" id="3.30.1340.10">
    <property type="entry name" value="HPr-like"/>
    <property type="match status" value="1"/>
</dbReference>
<dbReference type="Gene3D" id="3.50.30.10">
    <property type="entry name" value="Phosphohistidine domain"/>
    <property type="match status" value="1"/>
</dbReference>
<dbReference type="Gene3D" id="3.40.50.510">
    <property type="entry name" value="Phosphotransferase system, mannose-type IIA component"/>
    <property type="match status" value="1"/>
</dbReference>
<dbReference type="Gene3D" id="1.10.274.10">
    <property type="entry name" value="PtsI, HPr-binding domain"/>
    <property type="match status" value="1"/>
</dbReference>
<dbReference type="InterPro" id="IPR039643">
    <property type="entry name" value="DhaM"/>
</dbReference>
<dbReference type="InterPro" id="IPR012844">
    <property type="entry name" value="DhaM_N"/>
</dbReference>
<dbReference type="InterPro" id="IPR000032">
    <property type="entry name" value="HPr-like"/>
</dbReference>
<dbReference type="InterPro" id="IPR035895">
    <property type="entry name" value="HPr-like_sf"/>
</dbReference>
<dbReference type="InterPro" id="IPR008279">
    <property type="entry name" value="PEP-util_enz_mobile_dom"/>
</dbReference>
<dbReference type="InterPro" id="IPR036637">
    <property type="entry name" value="Phosphohistidine_dom_sf"/>
</dbReference>
<dbReference type="InterPro" id="IPR004701">
    <property type="entry name" value="PTS_EIIA_man-typ"/>
</dbReference>
<dbReference type="InterPro" id="IPR036662">
    <property type="entry name" value="PTS_EIIA_man-typ_sf"/>
</dbReference>
<dbReference type="InterPro" id="IPR008731">
    <property type="entry name" value="PTS_EIN"/>
</dbReference>
<dbReference type="InterPro" id="IPR001020">
    <property type="entry name" value="PTS_HPr_His_P_site"/>
</dbReference>
<dbReference type="InterPro" id="IPR036618">
    <property type="entry name" value="PtsI_HPr-bd_sf"/>
</dbReference>
<dbReference type="NCBIfam" id="TIGR02364">
    <property type="entry name" value="dha_pts"/>
    <property type="match status" value="1"/>
</dbReference>
<dbReference type="NCBIfam" id="NF008478">
    <property type="entry name" value="PRK11377.1"/>
    <property type="match status" value="1"/>
</dbReference>
<dbReference type="NCBIfam" id="TIGR01003">
    <property type="entry name" value="PTS_HPr_family"/>
    <property type="match status" value="1"/>
</dbReference>
<dbReference type="PANTHER" id="PTHR38594">
    <property type="entry name" value="PEP-DEPENDENT DIHYDROXYACETONE KINASE, PHOSPHORYL DONOR SUBUNIT DHAM"/>
    <property type="match status" value="1"/>
</dbReference>
<dbReference type="PANTHER" id="PTHR38594:SF1">
    <property type="entry name" value="PEP-DEPENDENT DIHYDROXYACETONE KINASE, PHOSPHORYL DONOR SUBUNIT DHAM"/>
    <property type="match status" value="1"/>
</dbReference>
<dbReference type="Pfam" id="PF03610">
    <property type="entry name" value="EIIA-man"/>
    <property type="match status" value="1"/>
</dbReference>
<dbReference type="Pfam" id="PF05524">
    <property type="entry name" value="PEP-utilisers_N"/>
    <property type="match status" value="1"/>
</dbReference>
<dbReference type="Pfam" id="PF00391">
    <property type="entry name" value="PEP-utilizers"/>
    <property type="match status" value="1"/>
</dbReference>
<dbReference type="Pfam" id="PF00381">
    <property type="entry name" value="PTS-HPr"/>
    <property type="match status" value="1"/>
</dbReference>
<dbReference type="PRINTS" id="PR00107">
    <property type="entry name" value="PHOSPHOCPHPR"/>
</dbReference>
<dbReference type="SUPFAM" id="SSF47831">
    <property type="entry name" value="Enzyme I of the PEP:sugar phosphotransferase system HPr-binding (sub)domain"/>
    <property type="match status" value="1"/>
</dbReference>
<dbReference type="SUPFAM" id="SSF55594">
    <property type="entry name" value="HPr-like"/>
    <property type="match status" value="1"/>
</dbReference>
<dbReference type="SUPFAM" id="SSF52009">
    <property type="entry name" value="Phosphohistidine domain"/>
    <property type="match status" value="1"/>
</dbReference>
<dbReference type="SUPFAM" id="SSF53062">
    <property type="entry name" value="PTS system fructose IIA component-like"/>
    <property type="match status" value="1"/>
</dbReference>
<dbReference type="PROSITE" id="PS51096">
    <property type="entry name" value="PTS_EIIA_TYPE_4"/>
    <property type="match status" value="1"/>
</dbReference>
<dbReference type="PROSITE" id="PS51350">
    <property type="entry name" value="PTS_HPR_DOM"/>
    <property type="match status" value="1"/>
</dbReference>
<dbReference type="PROSITE" id="PS00369">
    <property type="entry name" value="PTS_HPR_HIS"/>
    <property type="match status" value="1"/>
</dbReference>
<name>DHAM_ECOLI</name>
<organism>
    <name type="scientific">Escherichia coli (strain K12)</name>
    <dbReference type="NCBI Taxonomy" id="83333"/>
    <lineage>
        <taxon>Bacteria</taxon>
        <taxon>Pseudomonadati</taxon>
        <taxon>Pseudomonadota</taxon>
        <taxon>Gammaproteobacteria</taxon>
        <taxon>Enterobacterales</taxon>
        <taxon>Enterobacteriaceae</taxon>
        <taxon>Escherichia</taxon>
    </lineage>
</organism>
<feature type="chain" id="PRO_0000186713" description="PEP-dependent dihydroxyacetone kinase, phosphoryl donor subunit DhaM">
    <location>
        <begin position="1"/>
        <end position="472"/>
    </location>
</feature>
<feature type="domain" description="PTS EIIA type-4" evidence="1 8">
    <location>
        <begin position="1"/>
        <end position="135"/>
    </location>
</feature>
<feature type="domain" description="HPr" evidence="2 8">
    <location>
        <begin position="155"/>
        <end position="242"/>
    </location>
</feature>
<feature type="region of interest" description="PTS EI-like, N-terminal part" evidence="8">
    <location>
        <begin position="264"/>
        <end position="472"/>
    </location>
</feature>
<feature type="active site" description="Tele-phosphohistidine intermediate" evidence="1 8">
    <location>
        <position position="9"/>
    </location>
</feature>
<feature type="active site" description="Pros-phosphohistidine intermediate" evidence="1 8">
    <location>
        <position position="169"/>
    </location>
</feature>
<feature type="active site" description="Tele-phosphohistidine intermediate" evidence="8">
    <location>
        <position position="430"/>
    </location>
</feature>
<feature type="mutagenesis site" description="Loss of phosphotransfer activity." evidence="3">
    <original>H</original>
    <variation>A</variation>
    <location>
        <position position="9"/>
    </location>
</feature>
<feature type="mutagenesis site" description="Loss of phosphotransfer activity." evidence="3">
    <original>H</original>
    <variation>A</variation>
    <location>
        <position position="169"/>
    </location>
</feature>
<feature type="mutagenesis site" description="Loss of phosphotransfer activity." evidence="3">
    <original>H</original>
    <variation>A</variation>
    <location>
        <position position="430"/>
    </location>
</feature>
<evidence type="ECO:0000255" key="1">
    <source>
        <dbReference type="PROSITE-ProRule" id="PRU00419"/>
    </source>
</evidence>
<evidence type="ECO:0000255" key="2">
    <source>
        <dbReference type="PROSITE-ProRule" id="PRU00681"/>
    </source>
</evidence>
<evidence type="ECO:0000269" key="3">
    <source>
    </source>
</evidence>
<evidence type="ECO:0000269" key="4">
    <source>
    </source>
</evidence>
<evidence type="ECO:0000269" key="5">
    <source>
    </source>
</evidence>
<evidence type="ECO:0000303" key="6">
    <source>
    </source>
</evidence>
<evidence type="ECO:0000305" key="7"/>
<evidence type="ECO:0000305" key="8">
    <source>
    </source>
</evidence>
<accession>P37349</accession>
<accession>P76013</accession>
<protein>
    <recommendedName>
        <fullName evidence="8">PEP-dependent dihydroxyacetone kinase, phosphoryl donor subunit DhaM</fullName>
        <ecNumber evidence="3">2.7.1.121</ecNumber>
    </recommendedName>
    <alternativeName>
        <fullName evidence="6">Dihydroxyacetone kinase subunit M</fullName>
    </alternativeName>
</protein>
<sequence length="472" mass="51449">MVNLVIVSHSSRLGEGVGELARQMLMSDSCKIAIAAGIDDPQNPIGTDAVKVMEAIESVADADHVLVMMDMGSALLSAETALELLAPEIAAKVRLCAAPLVEGTLAATVSAASGADIDKVIFDAMHALEAKREQLGLPSSDTEISDTCPAYDEEARSLAVVIKNRNGLHVRPASRLVYTLSTFNADMLLEKNGKCVTPESINQIALLQVRYNDTLRLIAKGPEAEEALIAFRQLAEDNFGETEEVAPPTLRPVPPVSGKAFYYQPVLCTVQAKSTLTVEEEQDRLRQAIDFTLLDLMTLTAKAEASGLDDIAAIFSGHHTLLDDPELLAAASELLQHEHCTAEYAWQQVLKELSQQYQQLDDEYLQARYIDVDDLLHRTLVHLTQTKEELPQFNSPTILLAENIYPSTVLQLDPAVVKGICLSAGSPVSHSALIARELGIGWICQQGEKLYAIQPEETLTLDVKTQRFNRQG</sequence>